<evidence type="ECO:0000250" key="1">
    <source>
        <dbReference type="UniProtKB" id="Q9JIP4"/>
    </source>
</evidence>
<evidence type="ECO:0000255" key="2"/>
<evidence type="ECO:0000255" key="3">
    <source>
        <dbReference type="PROSITE-ProRule" id="PRU00351"/>
    </source>
</evidence>
<evidence type="ECO:0000256" key="4">
    <source>
        <dbReference type="SAM" id="MobiDB-lite"/>
    </source>
</evidence>
<evidence type="ECO:0000269" key="5">
    <source>
    </source>
</evidence>
<evidence type="ECO:0000269" key="6">
    <source>
    </source>
</evidence>
<evidence type="ECO:0000269" key="7">
    <source>
    </source>
</evidence>
<evidence type="ECO:0000269" key="8">
    <source>
    </source>
</evidence>
<evidence type="ECO:0000269" key="9">
    <source>
    </source>
</evidence>
<evidence type="ECO:0000269" key="10">
    <source>
    </source>
</evidence>
<evidence type="ECO:0000269" key="11">
    <source>
    </source>
</evidence>
<evidence type="ECO:0000269" key="12">
    <source>
    </source>
</evidence>
<evidence type="ECO:0000269" key="13">
    <source>
    </source>
</evidence>
<evidence type="ECO:0000269" key="14">
    <source>
    </source>
</evidence>
<evidence type="ECO:0000269" key="15">
    <source>
    </source>
</evidence>
<evidence type="ECO:0000269" key="16">
    <source>
    </source>
</evidence>
<evidence type="ECO:0000269" key="17">
    <source>
    </source>
</evidence>
<evidence type="ECO:0000269" key="18">
    <source>
    </source>
</evidence>
<evidence type="ECO:0000269" key="19">
    <source>
    </source>
</evidence>
<evidence type="ECO:0000269" key="20">
    <source>
    </source>
</evidence>
<evidence type="ECO:0000269" key="21">
    <source ref="1"/>
</evidence>
<evidence type="ECO:0000303" key="22">
    <source>
    </source>
</evidence>
<evidence type="ECO:0000303" key="23">
    <source>
    </source>
</evidence>
<evidence type="ECO:0000303" key="24">
    <source>
    </source>
</evidence>
<evidence type="ECO:0000303" key="25">
    <source>
    </source>
</evidence>
<evidence type="ECO:0000303" key="26">
    <source>
    </source>
</evidence>
<evidence type="ECO:0000303" key="27">
    <source ref="1"/>
</evidence>
<evidence type="ECO:0000305" key="28"/>
<evidence type="ECO:0000312" key="29">
    <source>
        <dbReference type="HGNC" id="HGNC:8599"/>
    </source>
</evidence>
<evidence type="ECO:0007744" key="30">
    <source>
        <dbReference type="PDB" id="6LTN"/>
    </source>
</evidence>
<evidence type="ECO:0007744" key="31">
    <source>
        <dbReference type="PDB" id="6LTO"/>
    </source>
</evidence>
<evidence type="ECO:0007744" key="32">
    <source>
        <dbReference type="PDB" id="6V6D"/>
    </source>
</evidence>
<evidence type="ECO:0007744" key="33">
    <source>
        <dbReference type="PDB" id="6WBF"/>
    </source>
</evidence>
<evidence type="ECO:0007744" key="34">
    <source>
        <dbReference type="PDB" id="6WBG"/>
    </source>
</evidence>
<evidence type="ECO:0007744" key="35">
    <source>
        <dbReference type="PDB" id="6WBI"/>
    </source>
</evidence>
<evidence type="ECO:0007744" key="36">
    <source>
        <dbReference type="PDB" id="6WBK"/>
    </source>
</evidence>
<evidence type="ECO:0007744" key="37">
    <source>
        <dbReference type="PDB" id="6WBL"/>
    </source>
</evidence>
<evidence type="ECO:0007744" key="38">
    <source>
        <dbReference type="PDB" id="6WBM"/>
    </source>
</evidence>
<evidence type="ECO:0007744" key="39">
    <source>
        <dbReference type="PDB" id="6WBN"/>
    </source>
</evidence>
<evidence type="ECO:0007744" key="40">
    <source>
        <dbReference type="PDB" id="7DWB"/>
    </source>
</evidence>
<evidence type="ECO:0007829" key="41">
    <source>
        <dbReference type="PDB" id="6LTO"/>
    </source>
</evidence>
<evidence type="ECO:0007829" key="42">
    <source>
        <dbReference type="PDB" id="6M02"/>
    </source>
</evidence>
<evidence type="ECO:0007829" key="43">
    <source>
        <dbReference type="PDB" id="6WBF"/>
    </source>
</evidence>
<evidence type="ECO:0007829" key="44">
    <source>
        <dbReference type="PDB" id="6WBN"/>
    </source>
</evidence>
<evidence type="ECO:0007829" key="45">
    <source>
        <dbReference type="PDB" id="7DWB"/>
    </source>
</evidence>
<evidence type="ECO:0007829" key="46">
    <source>
        <dbReference type="PDB" id="7F8N"/>
    </source>
</evidence>
<keyword id="KW-0002">3D-structure</keyword>
<keyword id="KW-0025">Alternative splicing</keyword>
<keyword id="KW-0106">Calcium</keyword>
<keyword id="KW-0107">Calcium channel</keyword>
<keyword id="KW-0109">Calcium transport</keyword>
<keyword id="KW-1003">Cell membrane</keyword>
<keyword id="KW-0221">Differentiation</keyword>
<keyword id="KW-0225">Disease variant</keyword>
<keyword id="KW-1015">Disulfide bond</keyword>
<keyword id="KW-0256">Endoplasmic reticulum</keyword>
<keyword id="KW-0325">Glycoprotein</keyword>
<keyword id="KW-0407">Ion channel</keyword>
<keyword id="KW-0406">Ion transport</keyword>
<keyword id="KW-0472">Membrane</keyword>
<keyword id="KW-0896">Oogenesis</keyword>
<keyword id="KW-0597">Phosphoprotein</keyword>
<keyword id="KW-1267">Proteomics identification</keyword>
<keyword id="KW-1185">Reference proteome</keyword>
<keyword id="KW-0702">S-nitrosylation</keyword>
<keyword id="KW-0812">Transmembrane</keyword>
<keyword id="KW-1133">Transmembrane helix</keyword>
<keyword id="KW-0813">Transport</keyword>
<name>PANX1_HUMAN</name>
<dbReference type="EMBL" id="AF093239">
    <property type="protein sequence ID" value="AAC61779.1"/>
    <property type="molecule type" value="mRNA"/>
</dbReference>
<dbReference type="EMBL" id="AF398509">
    <property type="protein sequence ID" value="AAK91714.1"/>
    <property type="molecule type" value="mRNA"/>
</dbReference>
<dbReference type="EMBL" id="AF398508">
    <property type="protein sequence ID" value="AAK91713.1"/>
    <property type="molecule type" value="Genomic_DNA"/>
</dbReference>
<dbReference type="EMBL" id="AF398506">
    <property type="protein sequence ID" value="AAK91713.1"/>
    <property type="status" value="JOINED"/>
    <property type="molecule type" value="Genomic_DNA"/>
</dbReference>
<dbReference type="EMBL" id="AF398507">
    <property type="protein sequence ID" value="AAK91713.1"/>
    <property type="status" value="JOINED"/>
    <property type="molecule type" value="Genomic_DNA"/>
</dbReference>
<dbReference type="EMBL" id="AY048509">
    <property type="protein sequence ID" value="AAL06604.1"/>
    <property type="molecule type" value="Genomic_DNA"/>
</dbReference>
<dbReference type="EMBL" id="AY359023">
    <property type="protein sequence ID" value="AAQ89382.1"/>
    <property type="molecule type" value="mRNA"/>
</dbReference>
<dbReference type="EMBL" id="AK074897">
    <property type="protein sequence ID" value="BAC11276.1"/>
    <property type="molecule type" value="mRNA"/>
</dbReference>
<dbReference type="EMBL" id="AP003966">
    <property type="status" value="NOT_ANNOTATED_CDS"/>
    <property type="molecule type" value="Genomic_DNA"/>
</dbReference>
<dbReference type="EMBL" id="BC016931">
    <property type="protein sequence ID" value="AAH16931.1"/>
    <property type="molecule type" value="mRNA"/>
</dbReference>
<dbReference type="EMBL" id="AH010945">
    <property type="protein sequence ID" value="AAK73361.1"/>
    <property type="molecule type" value="Genomic_DNA"/>
</dbReference>
<dbReference type="CCDS" id="CCDS8296.1">
    <molecule id="Q96RD7-1"/>
</dbReference>
<dbReference type="RefSeq" id="NP_056183.2">
    <molecule id="Q96RD7-1"/>
    <property type="nucleotide sequence ID" value="NM_015368.3"/>
</dbReference>
<dbReference type="PDB" id="6LTN">
    <property type="method" value="EM"/>
    <property type="resolution" value="3.10 A"/>
    <property type="chains" value="A/B/C/D/E/F/G=1-426"/>
</dbReference>
<dbReference type="PDB" id="6LTO">
    <property type="method" value="EM"/>
    <property type="resolution" value="3.10 A"/>
    <property type="chains" value="A/B/C/D/E/F/G=1-426"/>
</dbReference>
<dbReference type="PDB" id="6M02">
    <property type="method" value="EM"/>
    <property type="resolution" value="3.20 A"/>
    <property type="chains" value="A/B/C/D/E/F/G=1-426"/>
</dbReference>
<dbReference type="PDB" id="6M66">
    <property type="method" value="EM"/>
    <property type="resolution" value="4.10 A"/>
    <property type="chains" value="A/B/C/D/E/F/G=1-426"/>
</dbReference>
<dbReference type="PDB" id="6M67">
    <property type="method" value="EM"/>
    <property type="resolution" value="3.60 A"/>
    <property type="chains" value="A/B/C/D/E/F/G=1-426"/>
</dbReference>
<dbReference type="PDB" id="6M68">
    <property type="method" value="EM"/>
    <property type="resolution" value="4.60 A"/>
    <property type="chains" value="A/B/C/D/E/F/G=1-426"/>
</dbReference>
<dbReference type="PDB" id="6V6D">
    <property type="method" value="EM"/>
    <property type="resolution" value="3.77 A"/>
    <property type="chains" value="A/B/C/D/E/F/G=1-426"/>
</dbReference>
<dbReference type="PDB" id="6WBF">
    <property type="method" value="EM"/>
    <property type="resolution" value="2.83 A"/>
    <property type="chains" value="A/B/C/D/E/F/G=1-373"/>
</dbReference>
<dbReference type="PDB" id="6WBG">
    <property type="method" value="EM"/>
    <property type="resolution" value="2.97 A"/>
    <property type="chains" value="A/B/C/D/E/F/G=1-373"/>
</dbReference>
<dbReference type="PDB" id="6WBI">
    <property type="method" value="EM"/>
    <property type="resolution" value="4.39 A"/>
    <property type="chains" value="A/B/C/D/E/F/G=1-371"/>
</dbReference>
<dbReference type="PDB" id="6WBK">
    <property type="method" value="EM"/>
    <property type="resolution" value="6.01 A"/>
    <property type="chains" value="A/B/C/D/E/F/G=1-370"/>
</dbReference>
<dbReference type="PDB" id="6WBL">
    <property type="method" value="EM"/>
    <property type="resolution" value="5.13 A"/>
    <property type="chains" value="A/B/C/D/E/F/G=1-370"/>
</dbReference>
<dbReference type="PDB" id="6WBM">
    <property type="method" value="EM"/>
    <property type="resolution" value="2.86 A"/>
    <property type="chains" value="A/B/C/D/E/F/G=1-373"/>
</dbReference>
<dbReference type="PDB" id="6WBN">
    <property type="method" value="EM"/>
    <property type="resolution" value="2.83 A"/>
    <property type="chains" value="A/B/C/D/E/F/G/H/I/J/K/L/M/N=1-373"/>
</dbReference>
<dbReference type="PDB" id="7DWB">
    <property type="method" value="EM"/>
    <property type="resolution" value="3.15 A"/>
    <property type="chains" value="A/B/C/D/E/F/G=2-426"/>
</dbReference>
<dbReference type="PDB" id="7F8J">
    <property type="method" value="EM"/>
    <property type="resolution" value="3.60 A"/>
    <property type="chains" value="A/B/C/D/E/F/G=1-426"/>
</dbReference>
<dbReference type="PDB" id="7F8N">
    <property type="method" value="EM"/>
    <property type="resolution" value="3.40 A"/>
    <property type="chains" value="A/B/C/D/E/F/G=1-426"/>
</dbReference>
<dbReference type="PDB" id="7F8O">
    <property type="method" value="EM"/>
    <property type="resolution" value="3.60 A"/>
    <property type="chains" value="A/B/C/D/E/F/G=1-426"/>
</dbReference>
<dbReference type="PDB" id="7WSV">
    <property type="method" value="EM"/>
    <property type="resolution" value="4.50 A"/>
    <property type="chains" value="A/B/C/D/E/F/G=21-426"/>
</dbReference>
<dbReference type="PDB" id="8GTS">
    <property type="method" value="EM"/>
    <property type="resolution" value="3.87 A"/>
    <property type="chains" value="A/B/C/D/E/F/G=1-426"/>
</dbReference>
<dbReference type="PDB" id="8GTT">
    <property type="method" value="EM"/>
    <property type="resolution" value="3.20 A"/>
    <property type="chains" value="A/B/C/D/E/F/G=1-426"/>
</dbReference>
<dbReference type="PDB" id="8GYO">
    <property type="method" value="EM"/>
    <property type="resolution" value="3.80 A"/>
    <property type="chains" value="A/B/C/D/E/F/G=1-426"/>
</dbReference>
<dbReference type="PDBsum" id="6LTN"/>
<dbReference type="PDBsum" id="6LTO"/>
<dbReference type="PDBsum" id="6M02"/>
<dbReference type="PDBsum" id="6M66"/>
<dbReference type="PDBsum" id="6M67"/>
<dbReference type="PDBsum" id="6M68"/>
<dbReference type="PDBsum" id="6V6D"/>
<dbReference type="PDBsum" id="6WBF"/>
<dbReference type="PDBsum" id="6WBG"/>
<dbReference type="PDBsum" id="6WBI"/>
<dbReference type="PDBsum" id="6WBK"/>
<dbReference type="PDBsum" id="6WBL"/>
<dbReference type="PDBsum" id="6WBM"/>
<dbReference type="PDBsum" id="6WBN"/>
<dbReference type="PDBsum" id="7DWB"/>
<dbReference type="PDBsum" id="7F8J"/>
<dbReference type="PDBsum" id="7F8N"/>
<dbReference type="PDBsum" id="7F8O"/>
<dbReference type="PDBsum" id="7WSV"/>
<dbReference type="PDBsum" id="8GTS"/>
<dbReference type="PDBsum" id="8GTT"/>
<dbReference type="PDBsum" id="8GYO"/>
<dbReference type="EMDB" id="EMD-0975"/>
<dbReference type="EMDB" id="EMD-0976"/>
<dbReference type="EMDB" id="EMD-21071"/>
<dbReference type="EMDB" id="EMD-21588"/>
<dbReference type="EMDB" id="EMD-21589"/>
<dbReference type="EMDB" id="EMD-21590"/>
<dbReference type="EMDB" id="EMD-21591"/>
<dbReference type="EMDB" id="EMD-21592"/>
<dbReference type="EMDB" id="EMD-21593"/>
<dbReference type="EMDB" id="EMD-21594"/>
<dbReference type="EMDB" id="EMD-21595"/>
<dbReference type="EMDB" id="EMD-21596"/>
<dbReference type="EMDB" id="EMD-21597"/>
<dbReference type="EMDB" id="EMD-21598"/>
<dbReference type="EMDB" id="EMD-30028"/>
<dbReference type="EMDB" id="EMD-30114"/>
<dbReference type="EMDB" id="EMD-30115"/>
<dbReference type="EMDB" id="EMD-30116"/>
<dbReference type="EMDB" id="EMD-30880"/>
<dbReference type="EMDB" id="EMD-31489"/>
<dbReference type="EMDB" id="EMD-31490"/>
<dbReference type="EMDB" id="EMD-31491"/>
<dbReference type="EMDB" id="EMD-32768"/>
<dbReference type="EMDB" id="EMD-34266"/>
<dbReference type="EMDB" id="EMD-34267"/>
<dbReference type="EMDB" id="EMD-34268"/>
<dbReference type="EMDB" id="EMD-34374"/>
<dbReference type="SMR" id="Q96RD7"/>
<dbReference type="BioGRID" id="117295">
    <property type="interactions" value="301"/>
</dbReference>
<dbReference type="DIP" id="DIP-43936N"/>
<dbReference type="FunCoup" id="Q96RD7">
    <property type="interactions" value="920"/>
</dbReference>
<dbReference type="IntAct" id="Q96RD7">
    <property type="interactions" value="38"/>
</dbReference>
<dbReference type="MINT" id="Q96RD7"/>
<dbReference type="STRING" id="9606.ENSP00000227638"/>
<dbReference type="BindingDB" id="Q96RD7"/>
<dbReference type="ChEMBL" id="CHEMBL3779756"/>
<dbReference type="DrugBank" id="DB01032">
    <property type="generic name" value="Probenecid"/>
</dbReference>
<dbReference type="GuidetoPHARMACOLOGY" id="735"/>
<dbReference type="TCDB" id="1.A.25.2.1">
    <property type="family name" value="the gap junction-forming innexin (innexin) family"/>
</dbReference>
<dbReference type="GlyCosmos" id="Q96RD7">
    <property type="glycosylation" value="1 site, No reported glycans"/>
</dbReference>
<dbReference type="GlyGen" id="Q96RD7">
    <property type="glycosylation" value="3 sites, 1 N-linked glycan (1 site), 1 O-linked glycan (1 site)"/>
</dbReference>
<dbReference type="iPTMnet" id="Q96RD7"/>
<dbReference type="PhosphoSitePlus" id="Q96RD7"/>
<dbReference type="SwissPalm" id="Q96RD7"/>
<dbReference type="BioMuta" id="PANX1"/>
<dbReference type="DMDM" id="317373551"/>
<dbReference type="jPOST" id="Q96RD7"/>
<dbReference type="MassIVE" id="Q96RD7"/>
<dbReference type="PaxDb" id="9606-ENSP00000227638"/>
<dbReference type="PeptideAtlas" id="Q96RD7"/>
<dbReference type="ProteomicsDB" id="77946">
    <molecule id="Q96RD7-1"/>
</dbReference>
<dbReference type="ProteomicsDB" id="77947">
    <molecule id="Q96RD7-2"/>
</dbReference>
<dbReference type="ABCD" id="Q96RD7">
    <property type="antibodies" value="1 sequenced antibody"/>
</dbReference>
<dbReference type="Antibodypedia" id="1920">
    <property type="antibodies" value="268 antibodies from 39 providers"/>
</dbReference>
<dbReference type="DNASU" id="24145"/>
<dbReference type="Ensembl" id="ENST00000227638.8">
    <molecule id="Q96RD7-1"/>
    <property type="protein sequence ID" value="ENSP00000227638.3"/>
    <property type="gene ID" value="ENSG00000110218.9"/>
</dbReference>
<dbReference type="Ensembl" id="ENST00000436171.2">
    <molecule id="Q96RD7-2"/>
    <property type="protein sequence ID" value="ENSP00000411461.2"/>
    <property type="gene ID" value="ENSG00000110218.9"/>
</dbReference>
<dbReference type="GeneID" id="24145"/>
<dbReference type="KEGG" id="hsa:24145"/>
<dbReference type="MANE-Select" id="ENST00000227638.8">
    <property type="protein sequence ID" value="ENSP00000227638.3"/>
    <property type="RefSeq nucleotide sequence ID" value="NM_015368.4"/>
    <property type="RefSeq protein sequence ID" value="NP_056183.2"/>
</dbReference>
<dbReference type="UCSC" id="uc001peq.4">
    <molecule id="Q96RD7-1"/>
    <property type="organism name" value="human"/>
</dbReference>
<dbReference type="AGR" id="HGNC:8599"/>
<dbReference type="CTD" id="24145"/>
<dbReference type="DisGeNET" id="24145"/>
<dbReference type="GeneCards" id="PANX1"/>
<dbReference type="HGNC" id="HGNC:8599">
    <property type="gene designation" value="PANX1"/>
</dbReference>
<dbReference type="HPA" id="ENSG00000110218">
    <property type="expression patterns" value="Low tissue specificity"/>
</dbReference>
<dbReference type="MalaCards" id="PANX1"/>
<dbReference type="MIM" id="608420">
    <property type="type" value="gene"/>
</dbReference>
<dbReference type="MIM" id="618550">
    <property type="type" value="phenotype"/>
</dbReference>
<dbReference type="neXtProt" id="NX_Q96RD7"/>
<dbReference type="OpenTargets" id="ENSG00000110218"/>
<dbReference type="Orphanet" id="488191">
    <property type="disease" value="Female infertility due to oocyte meiotic arrest"/>
</dbReference>
<dbReference type="PharmGKB" id="PA32929"/>
<dbReference type="VEuPathDB" id="HostDB:ENSG00000110218"/>
<dbReference type="eggNOG" id="ENOG502QT58">
    <property type="taxonomic scope" value="Eukaryota"/>
</dbReference>
<dbReference type="GeneTree" id="ENSGT00940000153972"/>
<dbReference type="HOGENOM" id="CLU_050054_1_0_1"/>
<dbReference type="InParanoid" id="Q96RD7"/>
<dbReference type="OMA" id="IPDRFQC"/>
<dbReference type="OrthoDB" id="5867527at2759"/>
<dbReference type="PAN-GO" id="Q96RD7">
    <property type="GO annotations" value="4 GO annotations based on evolutionary models"/>
</dbReference>
<dbReference type="PhylomeDB" id="Q96RD7"/>
<dbReference type="TreeFam" id="TF333142"/>
<dbReference type="PathwayCommons" id="Q96RD7"/>
<dbReference type="Reactome" id="R-HSA-112303">
    <property type="pathway name" value="Electric Transmission Across Gap Junctions"/>
</dbReference>
<dbReference type="Reactome" id="R-HSA-844456">
    <property type="pathway name" value="The NLRP3 inflammasome"/>
</dbReference>
<dbReference type="Reactome" id="R-HSA-9856530">
    <property type="pathway name" value="High laminar flow shear stress activates signaling by PIEZO1 and PECAM1:CDH5:KDR in endothelial cells"/>
</dbReference>
<dbReference type="Reactome" id="R-HSA-9856532">
    <property type="pathway name" value="Mechanical load activates signaling by PIEZO1 and integrins in osteocytes"/>
</dbReference>
<dbReference type="SignaLink" id="Q96RD7"/>
<dbReference type="SIGNOR" id="Q96RD7"/>
<dbReference type="BioGRID-ORCS" id="24145">
    <property type="hits" value="11 hits in 1166 CRISPR screens"/>
</dbReference>
<dbReference type="ChiTaRS" id="PANX1">
    <property type="organism name" value="human"/>
</dbReference>
<dbReference type="GeneWiki" id="PANX1"/>
<dbReference type="GenomeRNAi" id="24145"/>
<dbReference type="Pharos" id="Q96RD7">
    <property type="development level" value="Tbio"/>
</dbReference>
<dbReference type="PRO" id="PR:Q96RD7"/>
<dbReference type="Proteomes" id="UP000005640">
    <property type="component" value="Chromosome 11"/>
</dbReference>
<dbReference type="RNAct" id="Q96RD7">
    <property type="molecule type" value="protein"/>
</dbReference>
<dbReference type="Bgee" id="ENSG00000110218">
    <property type="expression patterns" value="Expressed in cortical plate and 142 other cell types or tissues"/>
</dbReference>
<dbReference type="ExpressionAtlas" id="Q96RD7">
    <property type="expression patterns" value="baseline and differential"/>
</dbReference>
<dbReference type="GO" id="GO:0032059">
    <property type="term" value="C:bleb"/>
    <property type="evidence" value="ECO:0000314"/>
    <property type="project" value="BHF-UCL"/>
</dbReference>
<dbReference type="GO" id="GO:0005783">
    <property type="term" value="C:endoplasmic reticulum"/>
    <property type="evidence" value="ECO:0000314"/>
    <property type="project" value="UniProtKB"/>
</dbReference>
<dbReference type="GO" id="GO:0005789">
    <property type="term" value="C:endoplasmic reticulum membrane"/>
    <property type="evidence" value="ECO:0007669"/>
    <property type="project" value="UniProtKB-SubCell"/>
</dbReference>
<dbReference type="GO" id="GO:0005921">
    <property type="term" value="C:gap junction"/>
    <property type="evidence" value="ECO:0000314"/>
    <property type="project" value="UniProtKB"/>
</dbReference>
<dbReference type="GO" id="GO:0016020">
    <property type="term" value="C:membrane"/>
    <property type="evidence" value="ECO:0007005"/>
    <property type="project" value="UniProtKB"/>
</dbReference>
<dbReference type="GO" id="GO:0005886">
    <property type="term" value="C:plasma membrane"/>
    <property type="evidence" value="ECO:0000314"/>
    <property type="project" value="BHF-UCL"/>
</dbReference>
<dbReference type="GO" id="GO:0032991">
    <property type="term" value="C:protein-containing complex"/>
    <property type="evidence" value="ECO:0007669"/>
    <property type="project" value="Ensembl"/>
</dbReference>
<dbReference type="GO" id="GO:0051015">
    <property type="term" value="F:actin filament binding"/>
    <property type="evidence" value="ECO:0007669"/>
    <property type="project" value="Ensembl"/>
</dbReference>
<dbReference type="GO" id="GO:0005347">
    <property type="term" value="F:ATP transmembrane transporter activity"/>
    <property type="evidence" value="ECO:0000314"/>
    <property type="project" value="UniProtKB"/>
</dbReference>
<dbReference type="GO" id="GO:0005262">
    <property type="term" value="F:calcium channel activity"/>
    <property type="evidence" value="ECO:0000315"/>
    <property type="project" value="UniProtKB"/>
</dbReference>
<dbReference type="GO" id="GO:0005243">
    <property type="term" value="F:gap junction channel activity"/>
    <property type="evidence" value="ECO:0007669"/>
    <property type="project" value="Ensembl"/>
</dbReference>
<dbReference type="GO" id="GO:0042802">
    <property type="term" value="F:identical protein binding"/>
    <property type="evidence" value="ECO:0000353"/>
    <property type="project" value="IntAct"/>
</dbReference>
<dbReference type="GO" id="GO:0022840">
    <property type="term" value="F:leak channel activity"/>
    <property type="evidence" value="ECO:0000315"/>
    <property type="project" value="UniProtKB"/>
</dbReference>
<dbReference type="GO" id="GO:0005253">
    <property type="term" value="F:monoatomic anion channel activity"/>
    <property type="evidence" value="ECO:0000250"/>
    <property type="project" value="UniProtKB"/>
</dbReference>
<dbReference type="GO" id="GO:0002020">
    <property type="term" value="F:protease binding"/>
    <property type="evidence" value="ECO:0007669"/>
    <property type="project" value="Ensembl"/>
</dbReference>
<dbReference type="GO" id="GO:0097110">
    <property type="term" value="F:scaffold protein binding"/>
    <property type="evidence" value="ECO:0007669"/>
    <property type="project" value="Ensembl"/>
</dbReference>
<dbReference type="GO" id="GO:0005102">
    <property type="term" value="F:signaling receptor binding"/>
    <property type="evidence" value="ECO:0000353"/>
    <property type="project" value="UniProtKB"/>
</dbReference>
<dbReference type="GO" id="GO:0005198">
    <property type="term" value="F:structural molecule activity"/>
    <property type="evidence" value="ECO:0000250"/>
    <property type="project" value="UniProtKB"/>
</dbReference>
<dbReference type="GO" id="GO:0044325">
    <property type="term" value="F:transmembrane transporter binding"/>
    <property type="evidence" value="ECO:0007669"/>
    <property type="project" value="Ensembl"/>
</dbReference>
<dbReference type="GO" id="GO:0022829">
    <property type="term" value="F:wide pore channel activity"/>
    <property type="evidence" value="ECO:0000318"/>
    <property type="project" value="GO_Central"/>
</dbReference>
<dbReference type="GO" id="GO:0015867">
    <property type="term" value="P:ATP transport"/>
    <property type="evidence" value="ECO:0000314"/>
    <property type="project" value="UniProtKB"/>
</dbReference>
<dbReference type="GO" id="GO:0006816">
    <property type="term" value="P:calcium ion transport"/>
    <property type="evidence" value="ECO:0000315"/>
    <property type="project" value="UniProtKB"/>
</dbReference>
<dbReference type="GO" id="GO:0007267">
    <property type="term" value="P:cell-cell signaling"/>
    <property type="evidence" value="ECO:0000318"/>
    <property type="project" value="GO_Central"/>
</dbReference>
<dbReference type="GO" id="GO:0098656">
    <property type="term" value="P:monoatomic anion transmembrane transport"/>
    <property type="evidence" value="ECO:0000250"/>
    <property type="project" value="UniProtKB"/>
</dbReference>
<dbReference type="GO" id="GO:0006812">
    <property type="term" value="P:monoatomic cation transport"/>
    <property type="evidence" value="ECO:0000314"/>
    <property type="project" value="BHF-UCL"/>
</dbReference>
<dbReference type="GO" id="GO:0048477">
    <property type="term" value="P:oogenesis"/>
    <property type="evidence" value="ECO:0007669"/>
    <property type="project" value="UniProtKB-KW"/>
</dbReference>
<dbReference type="GO" id="GO:0032730">
    <property type="term" value="P:positive regulation of interleukin-1 alpha production"/>
    <property type="evidence" value="ECO:0007669"/>
    <property type="project" value="Ensembl"/>
</dbReference>
<dbReference type="GO" id="GO:0032731">
    <property type="term" value="P:positive regulation of interleukin-1 beta production"/>
    <property type="evidence" value="ECO:0000314"/>
    <property type="project" value="BHF-UCL"/>
</dbReference>
<dbReference type="GO" id="GO:0060907">
    <property type="term" value="P:positive regulation of macrophage cytokine production"/>
    <property type="evidence" value="ECO:0007669"/>
    <property type="project" value="Ensembl"/>
</dbReference>
<dbReference type="GO" id="GO:0033198">
    <property type="term" value="P:response to ATP"/>
    <property type="evidence" value="ECO:0007669"/>
    <property type="project" value="Ensembl"/>
</dbReference>
<dbReference type="GO" id="GO:0002931">
    <property type="term" value="P:response to ischemia"/>
    <property type="evidence" value="ECO:0007669"/>
    <property type="project" value="Ensembl"/>
</dbReference>
<dbReference type="DisProt" id="DP02945"/>
<dbReference type="InterPro" id="IPR000990">
    <property type="entry name" value="Innexin"/>
</dbReference>
<dbReference type="InterPro" id="IPR039099">
    <property type="entry name" value="Pannexin"/>
</dbReference>
<dbReference type="PANTHER" id="PTHR15759">
    <property type="entry name" value="PANNEXIN"/>
    <property type="match status" value="1"/>
</dbReference>
<dbReference type="PANTHER" id="PTHR15759:SF5">
    <property type="entry name" value="PANNEXIN-1"/>
    <property type="match status" value="1"/>
</dbReference>
<dbReference type="Pfam" id="PF00876">
    <property type="entry name" value="Innexin"/>
    <property type="match status" value="1"/>
</dbReference>
<dbReference type="PROSITE" id="PS51013">
    <property type="entry name" value="PANNEXIN"/>
    <property type="match status" value="1"/>
</dbReference>
<feature type="chain" id="PRO_0000208484" description="Pannexin-1">
    <location>
        <begin position="1"/>
        <end position="426"/>
    </location>
</feature>
<feature type="chain" id="PRO_0000460041" description="Caspase-activated pannexin-1">
    <location>
        <begin position="1"/>
        <end position="379"/>
    </location>
</feature>
<feature type="topological domain" description="Cytoplasmic" evidence="2">
    <location>
        <begin position="1"/>
        <end position="40"/>
    </location>
</feature>
<feature type="transmembrane region" description="Helical" evidence="3">
    <location>
        <begin position="41"/>
        <end position="61"/>
    </location>
</feature>
<feature type="topological domain" description="Extracellular" evidence="2">
    <location>
        <begin position="62"/>
        <end position="106"/>
    </location>
</feature>
<feature type="transmembrane region" description="Helical" evidence="3">
    <location>
        <begin position="107"/>
        <end position="127"/>
    </location>
</feature>
<feature type="topological domain" description="Cytoplasmic" evidence="2">
    <location>
        <begin position="128"/>
        <end position="217"/>
    </location>
</feature>
<feature type="transmembrane region" description="Helical" evidence="3">
    <location>
        <begin position="218"/>
        <end position="238"/>
    </location>
</feature>
<feature type="topological domain" description="Extracellular" evidence="2">
    <location>
        <begin position="239"/>
        <end position="266"/>
    </location>
</feature>
<feature type="transmembrane region" description="Helical" evidence="3">
    <location>
        <begin position="267"/>
        <end position="287"/>
    </location>
</feature>
<feature type="topological domain" description="Cytoplasmic" evidence="2">
    <location>
        <begin position="288"/>
        <end position="426"/>
    </location>
</feature>
<feature type="region of interest" description="Disordered" evidence="4">
    <location>
        <begin position="405"/>
        <end position="426"/>
    </location>
</feature>
<feature type="compositionally biased region" description="Polar residues" evidence="4">
    <location>
        <begin position="405"/>
        <end position="414"/>
    </location>
</feature>
<feature type="compositionally biased region" description="Basic and acidic residues" evidence="4">
    <location>
        <begin position="415"/>
        <end position="426"/>
    </location>
</feature>
<feature type="site" description="Cleavage; by CASP3 or CASP7" evidence="12">
    <location>
        <begin position="376"/>
        <end position="379"/>
    </location>
</feature>
<feature type="modified residue" description="S-nitrosocysteine" evidence="1">
    <location>
        <position position="40"/>
    </location>
</feature>
<feature type="modified residue" description="Phosphotyrosine" evidence="14">
    <location>
        <position position="199"/>
    </location>
</feature>
<feature type="modified residue" description="S-nitrosocysteine" evidence="1">
    <location>
        <position position="347"/>
    </location>
</feature>
<feature type="glycosylation site" description="N-linked (GlcNAc...) asparagine" evidence="10 15 19 20">
    <location>
        <position position="255"/>
    </location>
</feature>
<feature type="disulfide bond" evidence="16 18 19 20 30 31 32 33 34 35 38 39 40">
    <location>
        <begin position="66"/>
        <end position="265"/>
    </location>
</feature>
<feature type="disulfide bond" evidence="16 18 19 20 30 31 32 33 34 35 38 39 40">
    <location>
        <begin position="84"/>
        <end position="246"/>
    </location>
</feature>
<feature type="splice variant" id="VSP_011476" description="In isoform 2." evidence="22 27">
    <location>
        <begin position="401"/>
        <end position="404"/>
    </location>
</feature>
<feature type="sequence variant" id="VAR_016098" description="In dbSNP:rs1138800." evidence="5 6 8 21">
    <original>Q</original>
    <variation>H</variation>
    <location>
        <position position="5"/>
    </location>
</feature>
<feature type="sequence variant" id="VAR_083161" description="In OZEMA7; impaired glycosylation resulting in the absence of GLY2 and the accumulation of GLY1 forms; results in increased hemi-channel activity." evidence="15">
    <location>
        <begin position="21"/>
        <end position="23"/>
    </location>
</feature>
<feature type="sequence variant" id="VAR_083162" description="Found in a patient with primary ovarian failure with intellectual disability and sensorineural hearing loss; uncertain significance; no change in glycosylation pattern; dbSNP:rs143240087." evidence="13 15">
    <original>R</original>
    <variation>H</variation>
    <location>
        <position position="217"/>
    </location>
</feature>
<feature type="sequence variant" id="VAR_031225" description="No change in glycosylation pattern; dbSNP:rs12793348." evidence="15">
    <original>I</original>
    <variation>V</variation>
    <location>
        <position position="272"/>
    </location>
</feature>
<feature type="sequence variant" id="VAR_083163" description="In OZEMA7; impaired glycosylation resulting in the absence of GLY2 and the accumulation of GLY1 forms; results in increased hemi-channel activity; dbSNP:rs1591529130." evidence="15">
    <original>K</original>
    <variation>E</variation>
    <location>
        <position position="346"/>
    </location>
</feature>
<feature type="sequence variant" id="VAR_083164" description="In OZEMA7; impaired glycosylation resulting in the absence of GLY2 and the accumulation of GLY1 forms; results in increased hemichannel activity; dbSNP:rs1212949833." evidence="11 15">
    <original>C</original>
    <variation>S</variation>
    <location>
        <position position="347"/>
    </location>
</feature>
<feature type="sequence variant" id="VAR_083165" description="In OZEMA7; impaired glycosylation resulting in the absence of GLY2 and the accumulation of GLY1 forms; results in increased hemi-channel activity." evidence="15">
    <location>
        <begin position="392"/>
        <end position="426"/>
    </location>
</feature>
<feature type="mutagenesis site" description="No effect on voltage-dependence. Altered anion selectivity with equal permeability for iodide and choride." evidence="19">
    <original>W</original>
    <variation>A</variation>
    <location>
        <position position="74"/>
    </location>
</feature>
<feature type="mutagenesis site" description="Loss of voltage-dependence and anion selectivity. Strong increase in permeability of sodium over chloride." evidence="19">
    <original>R</original>
    <variation>E</variation>
    <location>
        <position position="75"/>
    </location>
</feature>
<feature type="mutagenesis site" description="Not cleaved by CASP3 or CASP7." evidence="12">
    <original>DMRD</original>
    <variation>AAAA</variation>
    <location>
        <begin position="164"/>
        <end position="167"/>
    </location>
</feature>
<feature type="mutagenesis site" description="Impaired glycosylation. Forms gap junctions by 2 hemichannels." evidence="19">
    <original>N</original>
    <variation>A</variation>
    <location>
        <position position="255"/>
    </location>
</feature>
<feature type="mutagenesis site" description="Impaired glycosylation. Loss of GLY1 and GLY2 forms. No effect on oocyte survival. Located in the cytoplasm. Decreased levels of pro-IL1B upon LPS priming and ATP stimulation. Attenuated pyroptotic cell death induced by LPS and ATP." evidence="10 15 20">
    <original>N</original>
    <variation>Q</variation>
    <location>
        <position position="255"/>
    </location>
</feature>
<feature type="mutagenesis site" description="Impaired glycosylation; loss of GLY2 form; oocyte death." evidence="15">
    <original>N</original>
    <variation>Q</variation>
    <location>
        <position position="338"/>
    </location>
</feature>
<feature type="mutagenesis site" description="Not cleaved by CASP3 or CASP7. Reduces channel activation." evidence="12">
    <original>DVVD</original>
    <variation>AAAA</variation>
    <variation>EEEE</variation>
    <location>
        <begin position="376"/>
        <end position="379"/>
    </location>
</feature>
<feature type="mutagenesis site" description="No effect on cell membrane location. Decreased levels of pro-IL1B upon LPS priming and ATP stimulation. Attenuated pyroptotic cell death induced by LPS and ATP." evidence="20">
    <original>D</original>
    <variation>A</variation>
    <location>
        <position position="379"/>
    </location>
</feature>
<feature type="mutagenesis site" description="No change in glycosylation pattern." evidence="15">
    <original>N</original>
    <variation>Q</variation>
    <location>
        <position position="394"/>
    </location>
</feature>
<feature type="mutagenesis site" description="No effect on cell membrane location. Promoted pyroptotic cell death induced by LPS and ATP." evidence="20">
    <original>S</original>
    <variation>A</variation>
    <location>
        <position position="424"/>
    </location>
</feature>
<feature type="sequence conflict" description="In Ref. 7; AAK73361." evidence="28" ref="7">
    <location>
        <begin position="182"/>
        <end position="185"/>
    </location>
</feature>
<feature type="sequence conflict" description="In Ref. 7; AAK73361." evidence="28" ref="7">
    <original>D</original>
    <variation>V</variation>
    <location>
        <position position="316"/>
    </location>
</feature>
<feature type="helix" evidence="43">
    <location>
        <begin position="3"/>
        <end position="10"/>
    </location>
</feature>
<feature type="helix" evidence="42">
    <location>
        <begin position="13"/>
        <end position="15"/>
    </location>
</feature>
<feature type="strand" evidence="43">
    <location>
        <begin position="21"/>
        <end position="27"/>
    </location>
</feature>
<feature type="helix" evidence="43">
    <location>
        <begin position="33"/>
        <end position="53"/>
    </location>
</feature>
<feature type="turn" evidence="43">
    <location>
        <begin position="56"/>
        <end position="58"/>
    </location>
</feature>
<feature type="helix" evidence="45">
    <location>
        <begin position="60"/>
        <end position="62"/>
    </location>
</feature>
<feature type="strand" evidence="43">
    <location>
        <begin position="63"/>
        <end position="65"/>
    </location>
</feature>
<feature type="helix" evidence="43">
    <location>
        <begin position="74"/>
        <end position="87"/>
    </location>
</feature>
<feature type="strand" evidence="41">
    <location>
        <begin position="88"/>
        <end position="90"/>
    </location>
</feature>
<feature type="turn" evidence="43">
    <location>
        <begin position="91"/>
        <end position="93"/>
    </location>
</feature>
<feature type="helix" evidence="41">
    <location>
        <begin position="97"/>
        <end position="99"/>
    </location>
</feature>
<feature type="helix" evidence="43">
    <location>
        <begin position="100"/>
        <end position="107"/>
    </location>
</feature>
<feature type="helix" evidence="43">
    <location>
        <begin position="109"/>
        <end position="130"/>
    </location>
</feature>
<feature type="helix" evidence="43">
    <location>
        <begin position="132"/>
        <end position="161"/>
    </location>
</feature>
<feature type="turn" evidence="45">
    <location>
        <begin position="168"/>
        <end position="171"/>
    </location>
</feature>
<feature type="strand" evidence="45">
    <location>
        <begin position="175"/>
        <end position="177"/>
    </location>
</feature>
<feature type="helix" evidence="43">
    <location>
        <begin position="195"/>
        <end position="203"/>
    </location>
</feature>
<feature type="strand" evidence="42">
    <location>
        <begin position="204"/>
        <end position="206"/>
    </location>
</feature>
<feature type="helix" evidence="43">
    <location>
        <begin position="208"/>
        <end position="235"/>
    </location>
</feature>
<feature type="helix" evidence="46">
    <location>
        <begin position="239"/>
        <end position="242"/>
    </location>
</feature>
<feature type="strand" evidence="43">
    <location>
        <begin position="243"/>
        <end position="246"/>
    </location>
</feature>
<feature type="helix" evidence="43">
    <location>
        <begin position="251"/>
        <end position="253"/>
    </location>
</feature>
<feature type="strand" evidence="43">
    <location>
        <begin position="257"/>
        <end position="259"/>
    </location>
</feature>
<feature type="strand" evidence="43">
    <location>
        <begin position="263"/>
        <end position="267"/>
    </location>
</feature>
<feature type="helix" evidence="43">
    <location>
        <begin position="270"/>
        <end position="295"/>
    </location>
</feature>
<feature type="helix" evidence="43">
    <location>
        <begin position="297"/>
        <end position="300"/>
    </location>
</feature>
<feature type="helix" evidence="43">
    <location>
        <begin position="305"/>
        <end position="311"/>
    </location>
</feature>
<feature type="strand" evidence="44">
    <location>
        <begin position="312"/>
        <end position="315"/>
    </location>
</feature>
<feature type="strand" evidence="43">
    <location>
        <begin position="323"/>
        <end position="326"/>
    </location>
</feature>
<feature type="helix" evidence="43">
    <location>
        <begin position="327"/>
        <end position="338"/>
    </location>
</feature>
<feature type="helix" evidence="43">
    <location>
        <begin position="339"/>
        <end position="341"/>
    </location>
</feature>
<feature type="helix" evidence="43">
    <location>
        <begin position="343"/>
        <end position="354"/>
    </location>
</feature>
<feature type="turn" evidence="43">
    <location>
        <begin position="355"/>
        <end position="357"/>
    </location>
</feature>
<feature type="helix" evidence="43">
    <location>
        <begin position="362"/>
        <end position="369"/>
    </location>
</feature>
<feature type="strand" evidence="45">
    <location>
        <begin position="373"/>
        <end position="376"/>
    </location>
</feature>
<feature type="turn" evidence="45">
    <location>
        <begin position="384"/>
        <end position="395"/>
    </location>
</feature>
<feature type="helix" evidence="45">
    <location>
        <begin position="396"/>
        <end position="398"/>
    </location>
</feature>
<feature type="turn" evidence="42">
    <location>
        <begin position="412"/>
        <end position="414"/>
    </location>
</feature>
<feature type="helix" evidence="42">
    <location>
        <begin position="415"/>
        <end position="421"/>
    </location>
</feature>
<protein>
    <recommendedName>
        <fullName evidence="28">Pannexin-1</fullName>
        <shortName evidence="28">PANX1</shortName>
    </recommendedName>
    <component>
        <recommendedName>
            <fullName evidence="24 25 26">Caspase-activated pannexin-1</fullName>
            <shortName evidence="28">Caspase-activated PANX1</shortName>
        </recommendedName>
    </component>
</protein>
<accession>Q96RD7</accession>
<accession>O75968</accession>
<accession>Q543A0</accession>
<accession>Q6UW26</accession>
<accession>Q96AM9</accession>
<accession>Q96L77</accession>
<accession>Q96RS5</accession>
<gene>
    <name evidence="29" type="primary">PANX1</name>
    <name evidence="23" type="synonym">MRS1</name>
    <name type="ORF">UNQ2529/PRO6028</name>
</gene>
<sequence>MAIAQLATEYVFSDFLLKEPTEPKFKGLRLELAVDKMVTCIAVGLPLLLISLAFAQEISIGTQISCFSPSSFSWRQAAFVDSYCWAAVQQKNSLQSESGNLPLWLHKFFPYILLLFAILLYLPPLFWRFAAAPHICSDLKFIMEELDKVYNRAIKAAKSARDLDMRDGACSVPGVTENLGQSLWEVSESHFKYPIVEQYLKTKKNSNNLIIKYISCRLLTLIIILLACIYLGYYFSLSSLSDEFVCSIKSGILRNDSTVPDQFQCKLIAVGIFQLLSVINLVVYVLLAPVVVYTLFVPFRQKTDVLKVYEILPTFDVLHFKSEGYNDLSLYNLFLEENISEVKSYKCLKVLENIKSSGQGIDPMLLLTNLGMIKMDVVDGKTPMSAEMREEQGNQTAELQGMNIDSETKANNGEKNARQRLLDSSC</sequence>
<comment type="function">
    <text evidence="1 7 9 12 17">Ion channel involved in a variety of physiological functions such as blood pressure regulation, apoptotic cell clearance and oogenesis (PubMed:15304325, PubMed:16908669, PubMed:20829356, PubMed:20944749, PubMed:30918116). Forms anion-selective channels with relatively low conductance and an order of permeabilities: nitrate&gt;iodide&gt;chlroride&gt;&gt;aspartate=glutamate=gluconate (By similarity). Can release ATP upon activation through phosphorylation or cleavage at C-terminus (PubMed:32238926). May play a role as a Ca(2+)-leak channel to regulate ER Ca(2+) homeostasis (PubMed:16908669).</text>
</comment>
<comment type="function">
    <molecule>Caspase-activated pannexin-1</molecule>
    <text evidence="12 17 19">During apoptosis, the C terminal tail is cleaved by caspases, which opens the main pore acting as a large-pore ATP efflux channel with a broad distribution, which allows the regulated release of molecules and ions smaller than 1 kDa, such as nucleotides ATP and UTP, and selective plasma membrane permeability to attract phagocytes that engulf the dying cells.</text>
</comment>
<comment type="catalytic activity">
    <reaction evidence="19 20">
        <text>chloride(in) = chloride(out)</text>
        <dbReference type="Rhea" id="RHEA:29823"/>
        <dbReference type="ChEBI" id="CHEBI:17996"/>
    </reaction>
</comment>
<comment type="catalytic activity">
    <reaction evidence="19">
        <text>iodide(out) = iodide(in)</text>
        <dbReference type="Rhea" id="RHEA:66324"/>
        <dbReference type="ChEBI" id="CHEBI:16382"/>
    </reaction>
</comment>
<comment type="catalytic activity">
    <reaction evidence="1">
        <text>ATP(in) = ATP(out)</text>
        <dbReference type="Rhea" id="RHEA:75687"/>
        <dbReference type="ChEBI" id="CHEBI:30616"/>
    </reaction>
</comment>
<comment type="catalytic activity">
    <reaction evidence="7 20">
        <text>K(+)(in) = K(+)(out)</text>
        <dbReference type="Rhea" id="RHEA:29463"/>
        <dbReference type="ChEBI" id="CHEBI:29103"/>
    </reaction>
</comment>
<comment type="catalytic activity">
    <reaction evidence="9 20">
        <text>Ca(2+)(in) = Ca(2+)(out)</text>
        <dbReference type="Rhea" id="RHEA:29671"/>
        <dbReference type="ChEBI" id="CHEBI:29108"/>
    </reaction>
</comment>
<comment type="catalytic activity">
    <reaction evidence="19">
        <text>Na(+)(in) = Na(+)(out)</text>
        <dbReference type="Rhea" id="RHEA:34963"/>
        <dbReference type="ChEBI" id="CHEBI:29101"/>
    </reaction>
</comment>
<comment type="catalytic activity">
    <reaction evidence="1">
        <text>nitrate(in) = nitrate(out)</text>
        <dbReference type="Rhea" id="RHEA:34923"/>
        <dbReference type="ChEBI" id="CHEBI:17632"/>
    </reaction>
</comment>
<comment type="catalytic activity">
    <reaction evidence="1">
        <text>L-aspartate(out) = L-aspartate(in)</text>
        <dbReference type="Rhea" id="RHEA:66332"/>
        <dbReference type="ChEBI" id="CHEBI:29991"/>
    </reaction>
</comment>
<comment type="catalytic activity">
    <reaction evidence="1">
        <text>L-glutamate(out) = L-glutamate(in)</text>
        <dbReference type="Rhea" id="RHEA:66336"/>
        <dbReference type="ChEBI" id="CHEBI:29985"/>
    </reaction>
</comment>
<comment type="catalytic activity">
    <reaction evidence="1">
        <text>D-gluconate(in) = D-gluconate(out)</text>
        <dbReference type="Rhea" id="RHEA:76139"/>
        <dbReference type="ChEBI" id="CHEBI:18391"/>
    </reaction>
</comment>
<comment type="catalytic activity">
    <molecule>Caspase-activated pannexin-1</molecule>
    <reaction evidence="17">
        <text>spermidine(in) = spermidine(out)</text>
        <dbReference type="Rhea" id="RHEA:35039"/>
        <dbReference type="ChEBI" id="CHEBI:57834"/>
    </reaction>
</comment>
<comment type="catalytic activity">
    <molecule>Caspase-activated pannexin-1</molecule>
    <reaction evidence="7 12 17 19">
        <text>ATP(in) = ATP(out)</text>
        <dbReference type="Rhea" id="RHEA:75687"/>
        <dbReference type="ChEBI" id="CHEBI:30616"/>
    </reaction>
</comment>
<comment type="subunit">
    <text evidence="10 16 18 19 20">Homoheptameric.</text>
</comment>
<comment type="interaction">
    <interactant intactId="EBI-7037612">
        <id>Q96RD7</id>
    </interactant>
    <interactant intactId="EBI-1171525">
        <id>P02652</id>
        <label>APOA2</label>
    </interactant>
    <organismsDiffer>false</organismsDiffer>
    <experiments>3</experiments>
</comment>
<comment type="interaction">
    <interactant intactId="EBI-7037612">
        <id>Q96RD7</id>
    </interactant>
    <interactant intactId="EBI-4290634">
        <id>Q9BQE5</id>
        <label>APOL2</label>
    </interactant>
    <organismsDiffer>false</organismsDiffer>
    <experiments>3</experiments>
</comment>
<comment type="interaction">
    <interactant intactId="EBI-7037612">
        <id>Q96RD7</id>
    </interactant>
    <interactant intactId="EBI-12701138">
        <id>P41181</id>
        <label>AQP2</label>
    </interactant>
    <organismsDiffer>false</organismsDiffer>
    <experiments>3</experiments>
</comment>
<comment type="interaction">
    <interactant intactId="EBI-7037612">
        <id>Q96RD7</id>
    </interactant>
    <interactant intactId="EBI-707714">
        <id>Q92843</id>
        <label>BCL2L2</label>
    </interactant>
    <organismsDiffer>false</organismsDiffer>
    <experiments>3</experiments>
</comment>
<comment type="interaction">
    <interactant intactId="EBI-7037612">
        <id>Q96RD7</id>
    </interactant>
    <interactant intactId="EBI-11579371">
        <id>Q9BXR6</id>
        <label>CFHR5</label>
    </interactant>
    <organismsDiffer>false</organismsDiffer>
    <experiments>3</experiments>
</comment>
<comment type="interaction">
    <interactant intactId="EBI-7037612">
        <id>Q96RD7</id>
    </interactant>
    <interactant intactId="EBI-12142299">
        <id>Q96IV6</id>
        <label>FAXDC2</label>
    </interactant>
    <organismsDiffer>false</organismsDiffer>
    <experiments>3</experiments>
</comment>
<comment type="interaction">
    <interactant intactId="EBI-7037612">
        <id>Q96RD7</id>
    </interactant>
    <interactant intactId="EBI-714550">
        <id>P37268</id>
        <label>FDFT1</label>
    </interactant>
    <organismsDiffer>false</organismsDiffer>
    <experiments>3</experiments>
</comment>
<comment type="interaction">
    <interactant intactId="EBI-7037612">
        <id>Q96RD7</id>
    </interactant>
    <interactant intactId="EBI-10314552">
        <id>Q9NVC3</id>
        <label>SLC38A7</label>
    </interactant>
    <organismsDiffer>false</organismsDiffer>
    <experiments>3</experiments>
</comment>
<comment type="interaction">
    <interactant intactId="EBI-7037612">
        <id>Q96RD7</id>
    </interactant>
    <interactant intactId="EBI-12195227">
        <id>Q8NBD8</id>
        <label>TMEM229B</label>
    </interactant>
    <organismsDiffer>false</organismsDiffer>
    <experiments>3</experiments>
</comment>
<comment type="interaction">
    <interactant intactId="EBI-7037612">
        <id>Q96RD7</id>
    </interactant>
    <interactant intactId="EBI-359977">
        <id>P01375</id>
        <label>TNF</label>
    </interactant>
    <organismsDiffer>false</organismsDiffer>
    <experiments>3</experiments>
</comment>
<comment type="interaction">
    <interactant intactId="EBI-7037612">
        <id>Q96RD7</id>
    </interactant>
    <interactant intactId="EBI-10191195">
        <id>O95183</id>
        <label>VAMP5</label>
    </interactant>
    <organismsDiffer>false</organismsDiffer>
    <experiments>3</experiments>
</comment>
<comment type="interaction">
    <interactant intactId="EBI-7037612">
        <id>Q96RD7</id>
    </interactant>
    <interactant intactId="EBI-723529">
        <id>Q14508</id>
        <label>WFDC2</label>
    </interactant>
    <organismsDiffer>false</organismsDiffer>
    <experiments>3</experiments>
</comment>
<comment type="interaction">
    <interactant intactId="EBI-25747443">
        <id>Q96RD7-1</id>
    </interactant>
    <interactant intactId="EBI-25747443">
        <id>Q96RD7-1</id>
        <label>PANX1</label>
    </interactant>
    <organismsDiffer>false</organismsDiffer>
    <experiments>4</experiments>
</comment>
<comment type="subcellular location">
    <subcellularLocation>
        <location evidence="12 14 15">Cell membrane</location>
        <topology evidence="3">Multi-pass membrane protein</topology>
    </subcellularLocation>
    <subcellularLocation>
        <location evidence="9">Endoplasmic reticulum membrane</location>
        <topology evidence="3">Multi-pass membrane protein</topology>
    </subcellularLocation>
</comment>
<comment type="alternative products">
    <event type="alternative splicing"/>
    <isoform>
        <id>Q96RD7-1</id>
        <name>1</name>
        <sequence type="displayed"/>
    </isoform>
    <isoform>
        <id>Q96RD7-2</id>
        <name>2</name>
        <sequence type="described" ref="VSP_011476"/>
    </isoform>
</comment>
<comment type="tissue specificity">
    <text evidence="15">Widely expressed (PubMed:30918116). Highest expression is observed in oocytes and brain (PubMed:30918116). Detected at very low levels in sperm cells (PubMed:30918116).</text>
</comment>
<comment type="PTM">
    <text evidence="1">S-nitrosylation inhibits channel currents and ATP release.</text>
</comment>
<comment type="PTM">
    <text evidence="10 15 19 20">N-glycosylation plays a role in cell surface targeting. Glycosylation at its extracellular surface makes unlikely that two oligomers could dock to form an intercellular channel such as in gap junctions (PubMed:17715132, PubMed:32494015, PubMed:33947837). Exists in three glycosylation states: non-glycosylated (GLY0), high-mannose glycosylated (GLY1), and fully mature glycosylated (GLY2) (PubMed:30918116).</text>
</comment>
<comment type="PTM">
    <text evidence="12 18 19">Cleaved by CASP3 and CASP7 during apoptosis. Cleavage opens the channel for the release of metabolites and induces plasma membrane permeability during apoptosis.</text>
</comment>
<comment type="PTM">
    <text evidence="14">Phosphorylated at Tyr-199 by SRC. Phosphorylation activates ATP release. Constitutively phosphorylated in vascular smooth muscle cells.</text>
</comment>
<comment type="disease" evidence="11 15">
    <disease id="DI-05642">
        <name>Oocyte/zygote/embryo maturation arrest 7</name>
        <acronym>OZEMA7</acronym>
        <description>An autosomal dominant infertility disorder due to oocyte degeneration and death, which may occur before or after fertilization.</description>
        <dbReference type="MIM" id="618550"/>
    </disease>
    <text>The disease is caused by variants affecting the gene represented in this entry.</text>
</comment>
<comment type="similarity">
    <text evidence="3">Belongs to the pannexin family.</text>
</comment>
<comment type="online information" name="Wikipedia">
    <link uri="https://en.wikipedia.org/wiki/Pannexin"/>
    <text>Pannexin entry</text>
</comment>
<reference key="1">
    <citation type="submission" date="1998-09" db="EMBL/GenBank/DDBJ databases">
        <title>A novel cDNA of unknown function.</title>
        <authorList>
            <person name="Bolger G.B."/>
            <person name="Steele M.R."/>
        </authorList>
    </citation>
    <scope>NUCLEOTIDE SEQUENCE [MRNA] (ISOFORM 2)</scope>
    <scope>VARIANT HIS-5</scope>
</reference>
<reference key="2">
    <citation type="journal article" date="2004" name="Genomics">
        <title>The mammalian pannexin family is homologous to the invertebrate innexin gap junction proteins.</title>
        <authorList>
            <person name="Baranova A."/>
            <person name="Ivanov D."/>
            <person name="Petrash N."/>
            <person name="Pestova A."/>
            <person name="Skoblov M."/>
            <person name="Kelmanson I."/>
            <person name="Shagin D."/>
            <person name="Nazarenko S."/>
            <person name="Geraymovych E."/>
            <person name="Litvin O."/>
            <person name="Tiunova A."/>
            <person name="Born T.L."/>
            <person name="Usman N."/>
            <person name="Staroverov D."/>
            <person name="Lukyanov S."/>
            <person name="Panchin Y."/>
        </authorList>
    </citation>
    <scope>NUCLEOTIDE SEQUENCE [GENOMIC DNA / MRNA] (ISOFORM 2)</scope>
    <scope>VARIANT HIS-5</scope>
</reference>
<reference key="3">
    <citation type="journal article" date="2003" name="Genome Res.">
        <title>The secreted protein discovery initiative (SPDI), a large-scale effort to identify novel human secreted and transmembrane proteins: a bioinformatics assessment.</title>
        <authorList>
            <person name="Clark H.F."/>
            <person name="Gurney A.L."/>
            <person name="Abaya E."/>
            <person name="Baker K."/>
            <person name="Baldwin D.T."/>
            <person name="Brush J."/>
            <person name="Chen J."/>
            <person name="Chow B."/>
            <person name="Chui C."/>
            <person name="Crowley C."/>
            <person name="Currell B."/>
            <person name="Deuel B."/>
            <person name="Dowd P."/>
            <person name="Eaton D."/>
            <person name="Foster J.S."/>
            <person name="Grimaldi C."/>
            <person name="Gu Q."/>
            <person name="Hass P.E."/>
            <person name="Heldens S."/>
            <person name="Huang A."/>
            <person name="Kim H.S."/>
            <person name="Klimowski L."/>
            <person name="Jin Y."/>
            <person name="Johnson S."/>
            <person name="Lee J."/>
            <person name="Lewis L."/>
            <person name="Liao D."/>
            <person name="Mark M.R."/>
            <person name="Robbie E."/>
            <person name="Sanchez C."/>
            <person name="Schoenfeld J."/>
            <person name="Seshagiri S."/>
            <person name="Simmons L."/>
            <person name="Singh J."/>
            <person name="Smith V."/>
            <person name="Stinson J."/>
            <person name="Vagts A."/>
            <person name="Vandlen R.L."/>
            <person name="Watanabe C."/>
            <person name="Wieand D."/>
            <person name="Woods K."/>
            <person name="Xie M.-H."/>
            <person name="Yansura D.G."/>
            <person name="Yi S."/>
            <person name="Yu G."/>
            <person name="Yuan J."/>
            <person name="Zhang M."/>
            <person name="Zhang Z."/>
            <person name="Goddard A.D."/>
            <person name="Wood W.I."/>
            <person name="Godowski P.J."/>
            <person name="Gray A.M."/>
        </authorList>
    </citation>
    <scope>NUCLEOTIDE SEQUENCE [LARGE SCALE MRNA] (ISOFORM 1)</scope>
    <scope>VARIANT HIS-5</scope>
</reference>
<reference key="4">
    <citation type="journal article" date="2005" name="DNA Res.">
        <title>Signal sequence and keyword trap in silico for selection of full-length human cDNAs encoding secretion or membrane proteins from oligo-capped cDNA libraries.</title>
        <authorList>
            <person name="Otsuki T."/>
            <person name="Ota T."/>
            <person name="Nishikawa T."/>
            <person name="Hayashi K."/>
            <person name="Suzuki Y."/>
            <person name="Yamamoto J."/>
            <person name="Wakamatsu A."/>
            <person name="Kimura K."/>
            <person name="Sakamoto K."/>
            <person name="Hatano N."/>
            <person name="Kawai Y."/>
            <person name="Ishii S."/>
            <person name="Saito K."/>
            <person name="Kojima S."/>
            <person name="Sugiyama T."/>
            <person name="Ono T."/>
            <person name="Okano K."/>
            <person name="Yoshikawa Y."/>
            <person name="Aotsuka S."/>
            <person name="Sasaki N."/>
            <person name="Hattori A."/>
            <person name="Okumura K."/>
            <person name="Nagai K."/>
            <person name="Sugano S."/>
            <person name="Isogai T."/>
        </authorList>
    </citation>
    <scope>NUCLEOTIDE SEQUENCE [LARGE SCALE MRNA] (ISOFORM 1)</scope>
    <scope>VARIANT HIS-5</scope>
</reference>
<reference key="5">
    <citation type="journal article" date="2006" name="Nature">
        <title>Human chromosome 11 DNA sequence and analysis including novel gene identification.</title>
        <authorList>
            <person name="Taylor T.D."/>
            <person name="Noguchi H."/>
            <person name="Totoki Y."/>
            <person name="Toyoda A."/>
            <person name="Kuroki Y."/>
            <person name="Dewar K."/>
            <person name="Lloyd C."/>
            <person name="Itoh T."/>
            <person name="Takeda T."/>
            <person name="Kim D.-W."/>
            <person name="She X."/>
            <person name="Barlow K.F."/>
            <person name="Bloom T."/>
            <person name="Bruford E."/>
            <person name="Chang J.L."/>
            <person name="Cuomo C.A."/>
            <person name="Eichler E."/>
            <person name="FitzGerald M.G."/>
            <person name="Jaffe D.B."/>
            <person name="LaButti K."/>
            <person name="Nicol R."/>
            <person name="Park H.-S."/>
            <person name="Seaman C."/>
            <person name="Sougnez C."/>
            <person name="Yang X."/>
            <person name="Zimmer A.R."/>
            <person name="Zody M.C."/>
            <person name="Birren B.W."/>
            <person name="Nusbaum C."/>
            <person name="Fujiyama A."/>
            <person name="Hattori M."/>
            <person name="Rogers J."/>
            <person name="Lander E.S."/>
            <person name="Sakaki Y."/>
        </authorList>
    </citation>
    <scope>NUCLEOTIDE SEQUENCE [LARGE SCALE GENOMIC DNA]</scope>
</reference>
<reference key="6">
    <citation type="journal article" date="2004" name="Genome Res.">
        <title>The status, quality, and expansion of the NIH full-length cDNA project: the Mammalian Gene Collection (MGC).</title>
        <authorList>
            <consortium name="The MGC Project Team"/>
        </authorList>
    </citation>
    <scope>NUCLEOTIDE SEQUENCE [LARGE SCALE MRNA] (ISOFORM 1)</scope>
    <source>
        <tissue>Bone</tissue>
    </source>
</reference>
<reference key="7">
    <citation type="submission" date="2000-06" db="EMBL/GenBank/DDBJ databases">
        <title>Genomic organization of putative human gap junction proteins PANX1 and PANX2.</title>
        <authorList>
            <person name="Baranova A.V."/>
            <person name="Ivanov D.V."/>
            <person name="Borodina T.A."/>
            <person name="Panchin Y.V."/>
            <person name="Shagin D.A."/>
            <person name="Lukyanov S.A."/>
        </authorList>
    </citation>
    <scope>NUCLEOTIDE SEQUENCE [GENOMIC DNA] OF 62-426</scope>
</reference>
<reference key="8">
    <citation type="journal article" date="2004" name="FEBS Lett.">
        <title>Pannexin membrane channels are mechanosensitive conduits for ATP.</title>
        <authorList>
            <person name="Bao L."/>
            <person name="Locovei S."/>
            <person name="Dahl G."/>
        </authorList>
    </citation>
    <scope>FUNCTION</scope>
    <scope>TRANSPORTER ACTIVITY</scope>
</reference>
<reference key="9">
    <citation type="journal article" date="2006" name="J. Cell Biol.">
        <title>Functional implications of calcium permeability of the channel formed by pannexin 1.</title>
        <authorList>
            <person name="Vanden Abeele F."/>
            <person name="Bidaux G."/>
            <person name="Gordienko D."/>
            <person name="Beck B."/>
            <person name="Panchin Y.V."/>
            <person name="Baranova A.V."/>
            <person name="Ivanov D.V."/>
            <person name="Skryma R."/>
            <person name="Prevarskaya N."/>
        </authorList>
    </citation>
    <scope>FUNCTION</scope>
    <scope>SUBCELLULAR LOCATION</scope>
    <scope>TRANSPORTER ACTIVITY</scope>
</reference>
<reference key="10">
    <citation type="journal article" date="2007" name="J. Biol. Chem.">
        <title>Pannexin1 channels contain a glycosylation site that targets the hexamer to the plasma membrane.</title>
        <authorList>
            <person name="Boassa D."/>
            <person name="Ambrosi C."/>
            <person name="Qiu F."/>
            <person name="Dahl G."/>
            <person name="Gaietta G."/>
            <person name="Sosinsky G."/>
        </authorList>
    </citation>
    <scope>GLYCOSYLATION AT ASN-255</scope>
    <scope>HOMOOLIGOMERIZATION</scope>
    <scope>SUBCELLULAR LOCATION</scope>
    <scope>MUTAGENESIS OF ASN-255</scope>
</reference>
<reference key="11">
    <citation type="journal article" date="2010" name="Nature">
        <title>Pannexin 1 channels mediate 'find-me' signal release and membrane permeability during apoptosis.</title>
        <authorList>
            <person name="Chekeni F.B."/>
            <person name="Elliott M.R."/>
            <person name="Sandilos J.K."/>
            <person name="Walk S.F."/>
            <person name="Kinchen J.M."/>
            <person name="Lazarowski E.R."/>
            <person name="Armstrong A.J."/>
            <person name="Penuela S."/>
            <person name="Laird D.W."/>
            <person name="Salvesen G.S."/>
            <person name="Isakson B.E."/>
            <person name="Bayliss D.A."/>
            <person name="Ravichandran K.S."/>
        </authorList>
    </citation>
    <scope>FUNCTION</scope>
    <scope>CLEAVAGE</scope>
    <scope>SUBCELLULAR LOCATION</scope>
    <scope>TRANSPORTER ACTIVITY</scope>
    <scope>MUTAGENESIS OF 164-ASP--ASP-167 AND 376-ASP--ASP-379</scope>
</reference>
<reference key="12">
    <citation type="journal article" date="2019" name="J. Biol. Chem.">
        <title>Constitutive SRC-mediated phosphorylation of pannexin 1 at tyrosine 198 occurs at the plasma membrane.</title>
        <authorList>
            <person name="DeLalio L.J."/>
            <person name="Billaud M."/>
            <person name="Ruddiman C.A."/>
            <person name="Johnstone S.R."/>
            <person name="Butcher J.T."/>
            <person name="Wolpe A.G."/>
            <person name="Jin X."/>
            <person name="Keller T.C.S. IV"/>
            <person name="Keller A.S."/>
            <person name="Riviere T."/>
            <person name="Good M.E."/>
            <person name="Best A.K."/>
            <person name="Lohman A.W."/>
            <person name="Swayne L.A."/>
            <person name="Penuela S."/>
            <person name="Thompson R.J."/>
            <person name="Lampe P.D."/>
            <person name="Yeager M."/>
            <person name="Isakson B.E."/>
        </authorList>
    </citation>
    <scope>PHOSPHORYLATION AT TYR-199</scope>
    <scope>SUBCELLULAR LOCATION</scope>
</reference>
<reference key="13">
    <citation type="journal article" date="2020" name="Nature">
        <title>Metabolites released from apoptotic cells act as tissue messengers.</title>
        <authorList>
            <person name="Medina C.B."/>
            <person name="Mehrotra P."/>
            <person name="Arandjelovic S."/>
            <person name="Perry J.S.A."/>
            <person name="Guo Y."/>
            <person name="Morioka S."/>
            <person name="Barron B."/>
            <person name="Walk S.F."/>
            <person name="Ghesquiere B."/>
            <person name="Krupnick A.S."/>
            <person name="Lorenz U."/>
            <person name="Ravichandran K.S."/>
        </authorList>
    </citation>
    <scope>CLEAVAGE</scope>
    <scope>FUNCTION</scope>
    <scope>TRANSPORTER ACTIVITY</scope>
</reference>
<reference evidence="30 31" key="14">
    <citation type="journal article" date="2020" name="Cell Res.">
        <title>Structural basis for gating mechanism of Pannexin 1 channel.</title>
        <authorList>
            <person name="Mou L."/>
            <person name="Ke M."/>
            <person name="Song M."/>
            <person name="Shan Y."/>
            <person name="Xiao Q."/>
            <person name="Liu Q."/>
            <person name="Li J."/>
            <person name="Sun K."/>
            <person name="Pu L."/>
            <person name="Guo L."/>
            <person name="Geng J."/>
            <person name="Wu J."/>
            <person name="Deng D."/>
        </authorList>
    </citation>
    <scope>STRUCTURE BY ELECTRON MICROSCOPY (3.10 ANGSTROMS)</scope>
    <scope>DISULFIDE BONDS</scope>
    <scope>CLEAVAGE</scope>
</reference>
<reference evidence="33 34 35 36 37 38 39" key="15">
    <citation type="journal article" date="2020" name="Nature">
        <title>Structures of human pannexin 1 reveal ion pathways and mechanism of gating.</title>
        <authorList>
            <person name="Ruan Z."/>
            <person name="Orozco I.J."/>
            <person name="Du J."/>
            <person name="Lue W."/>
        </authorList>
    </citation>
    <scope>STRUCTURE BY ELECTRON MICROSCOPY (2.83 ANGSTROMS) OF 1-373</scope>
    <scope>DISULFIDE BONDS</scope>
    <scope>CLEAVAGE</scope>
    <scope>MUTAGENESIS OF TRP-74; ARG-75 AND ASN-255</scope>
    <scope>SUBUNIT</scope>
    <scope>TRANSPORTER ACTIVITY</scope>
    <scope>GLYCOSYLATION AT ASN-255</scope>
</reference>
<reference evidence="32" key="16">
    <citation type="journal article" date="2020" name="Nat. Struct. Mol. Biol.">
        <title>Cryo-EM structures of the ATP release channel pannexin 1.</title>
        <authorList>
            <person name="Deng Z."/>
            <person name="He Z."/>
            <person name="Maksaev G."/>
            <person name="Bitter R.M."/>
            <person name="Rau M."/>
            <person name="Fitzpatrick J.A.J."/>
            <person name="Yuan P."/>
        </authorList>
    </citation>
    <scope>STRUCTURE BY ELECTRON MICROSCOPY (3.77 ANGSTROMS)</scope>
    <scope>DISULFIDE BONDS</scope>
    <scope>SUBUNIT</scope>
</reference>
<reference evidence="40" key="17">
    <citation type="journal article" date="2021" name="Cell Discov.">
        <title>Structure of the full-length human Pannexin1 channel and insights into its role in pyroptosis.</title>
        <authorList>
            <person name="Zhang S."/>
            <person name="Yuan B."/>
            <person name="Lam J.H."/>
            <person name="Zhou J."/>
            <person name="Zhou X."/>
            <person name="Ramos-Mandujano G."/>
            <person name="Tian X."/>
            <person name="Liu Y."/>
            <person name="Han R."/>
            <person name="Li Y."/>
            <person name="Gao X."/>
            <person name="Li M."/>
            <person name="Yang M."/>
        </authorList>
    </citation>
    <scope>STRUCTURE BY ELECTRON MICROSCOPY (3.15 ANGSTROMS) OF 2-426</scope>
    <scope>DISULFIDE BONDS</scope>
    <scope>SUBUNIT</scope>
    <scope>GLYCOSYLATION AT ASN-255</scope>
    <scope>MUTAGENESIS OF ASN-255; ASP-379 AND SER-424</scope>
    <scope>TRANSPORTER ACTIVITY</scope>
</reference>
<reference key="18">
    <citation type="journal article" date="2010" name="J. Biol. Chem.">
        <title>Intracellular cysteine 346 is essentially involved in regulating Panx1 channel activity.</title>
        <authorList>
            <person name="Bunse S."/>
            <person name="Schmidt M."/>
            <person name="Prochnow N."/>
            <person name="Zoidl G."/>
            <person name="Dermietzel R."/>
        </authorList>
    </citation>
    <scope>FUNCTION</scope>
    <scope>CHARACTERIZATION OF VARIANT OZEMA7 SER-347</scope>
</reference>
<reference key="19">
    <citation type="journal article" date="2016" name="J. Biol. Chem.">
        <title>A Germline Variant in the PANX1 Gene Has Reduced Channel Function and Is Associated with Multisystem Dysfunction.</title>
        <authorList>
            <person name="Shao Q."/>
            <person name="Lindstrom K."/>
            <person name="Shi R."/>
            <person name="Kelly J."/>
            <person name="Schroeder A."/>
            <person name="Juusola J."/>
            <person name="Levine K.L."/>
            <person name="Esseltine J.L."/>
            <person name="Penuela S."/>
            <person name="Jackson M.F."/>
            <person name="Laird D.W."/>
        </authorList>
    </citation>
    <scope>VARIANT HIS-217</scope>
    <scope>CHARACTERIZATION OF VARIANT HIS-217</scope>
</reference>
<reference key="20">
    <citation type="journal article" date="2019" name="Sci. Transl. Med.">
        <title>A pannexin 1 channelopathy causes human oocyte death.</title>
        <authorList>
            <person name="Sang Q."/>
            <person name="Zhang Z."/>
            <person name="Shi J."/>
            <person name="Sun X."/>
            <person name="Li B."/>
            <person name="Yan Z."/>
            <person name="Xue S."/>
            <person name="Ai A."/>
            <person name="Lyu Q."/>
            <person name="Li W."/>
            <person name="Zhang J."/>
            <person name="Wu L."/>
            <person name="Mao X."/>
            <person name="Chen B."/>
            <person name="Mu J."/>
            <person name="Li Q."/>
            <person name="Du J."/>
            <person name="Sun Q."/>
            <person name="Jin L."/>
            <person name="He L."/>
            <person name="Zhu S."/>
            <person name="Kuang Y."/>
            <person name="Wang L."/>
        </authorList>
    </citation>
    <scope>FUNCTION</scope>
    <scope>SUBCELLULAR LOCATION</scope>
    <scope>TISSUE SPECIFICITY</scope>
    <scope>INVOLVEMENT IN OZEMA7</scope>
    <scope>VARIANTS OZEMA7 21-THR--PRO-23 DEL; GLU-346; SER-347 AND 392-GLN--CYS-426 DEL</scope>
    <scope>CHARACTERIZATION OF VARIANTS OZEMA7 21-THR--PRO-23 DEL; GLU-346; SER-347 AND 392-GLN--CYS-426 DEL</scope>
    <scope>MUTAGENESIS OF ASN-255; ASN-338 AND ASN-394</scope>
    <scope>VARIANTS HIS-217 AND VAL-272</scope>
    <scope>CHARACTERIZATION OF VARIANTS HIS-217 AND VAL-272</scope>
    <scope>GLYCOSYLATION</scope>
</reference>
<proteinExistence type="evidence at protein level"/>
<organism>
    <name type="scientific">Homo sapiens</name>
    <name type="common">Human</name>
    <dbReference type="NCBI Taxonomy" id="9606"/>
    <lineage>
        <taxon>Eukaryota</taxon>
        <taxon>Metazoa</taxon>
        <taxon>Chordata</taxon>
        <taxon>Craniata</taxon>
        <taxon>Vertebrata</taxon>
        <taxon>Euteleostomi</taxon>
        <taxon>Mammalia</taxon>
        <taxon>Eutheria</taxon>
        <taxon>Euarchontoglires</taxon>
        <taxon>Primates</taxon>
        <taxon>Haplorrhini</taxon>
        <taxon>Catarrhini</taxon>
        <taxon>Hominidae</taxon>
        <taxon>Homo</taxon>
    </lineage>
</organism>